<name>CDD_MOUSE</name>
<feature type="chain" id="PRO_0000171683" description="Cytidine deaminase">
    <location>
        <begin position="1"/>
        <end position="146"/>
    </location>
</feature>
<feature type="domain" description="CMP/dCMP-type deaminase" evidence="2">
    <location>
        <begin position="13"/>
        <end position="140"/>
    </location>
</feature>
<feature type="active site" description="Proton donor" evidence="3">
    <location>
        <position position="67"/>
    </location>
</feature>
<feature type="binding site">
    <location>
        <begin position="54"/>
        <end position="56"/>
    </location>
    <ligand>
        <name>substrate</name>
    </ligand>
</feature>
<feature type="binding site">
    <location>
        <position position="65"/>
    </location>
    <ligand>
        <name>Zn(2+)</name>
        <dbReference type="ChEBI" id="CHEBI:29105"/>
        <note>catalytic</note>
    </ligand>
</feature>
<feature type="binding site">
    <location>
        <position position="99"/>
    </location>
    <ligand>
        <name>Zn(2+)</name>
        <dbReference type="ChEBI" id="CHEBI:29105"/>
        <note>catalytic</note>
    </ligand>
</feature>
<feature type="binding site">
    <location>
        <position position="102"/>
    </location>
    <ligand>
        <name>Zn(2+)</name>
        <dbReference type="ChEBI" id="CHEBI:29105"/>
        <note>catalytic</note>
    </ligand>
</feature>
<feature type="helix" evidence="5">
    <location>
        <begin position="13"/>
        <end position="26"/>
    </location>
</feature>
<feature type="turn" evidence="5">
    <location>
        <begin position="32"/>
        <end position="34"/>
    </location>
</feature>
<feature type="strand" evidence="5">
    <location>
        <begin position="38"/>
        <end position="44"/>
    </location>
</feature>
<feature type="strand" evidence="5">
    <location>
        <begin position="49"/>
        <end position="53"/>
    </location>
</feature>
<feature type="helix" evidence="5">
    <location>
        <begin position="60"/>
        <end position="62"/>
    </location>
</feature>
<feature type="helix" evidence="5">
    <location>
        <begin position="66"/>
        <end position="76"/>
    </location>
</feature>
<feature type="strand" evidence="5">
    <location>
        <begin position="82"/>
        <end position="90"/>
    </location>
</feature>
<feature type="strand" evidence="5">
    <location>
        <begin position="92"/>
        <end position="94"/>
    </location>
</feature>
<feature type="helix" evidence="5">
    <location>
        <begin position="100"/>
        <end position="108"/>
    </location>
</feature>
<feature type="strand" evidence="5">
    <location>
        <begin position="114"/>
        <end position="118"/>
    </location>
</feature>
<feature type="strand" evidence="5">
    <location>
        <begin position="124"/>
        <end position="128"/>
    </location>
</feature>
<feature type="helix" evidence="5">
    <location>
        <begin position="129"/>
        <end position="132"/>
    </location>
</feature>
<feature type="helix" evidence="5">
    <location>
        <begin position="139"/>
        <end position="142"/>
    </location>
</feature>
<dbReference type="EC" id="3.5.4.5"/>
<dbReference type="EMBL" id="AK008793">
    <property type="protein sequence ID" value="BAB25898.1"/>
    <property type="molecule type" value="mRNA"/>
</dbReference>
<dbReference type="EMBL" id="BC050114">
    <property type="protein sequence ID" value="AAH50114.1"/>
    <property type="molecule type" value="mRNA"/>
</dbReference>
<dbReference type="CCDS" id="CCDS18826.1"/>
<dbReference type="RefSeq" id="NP_082452.1">
    <property type="nucleotide sequence ID" value="NM_028176.1"/>
</dbReference>
<dbReference type="PDB" id="1ZAB">
    <property type="method" value="X-ray"/>
    <property type="resolution" value="2.36 A"/>
    <property type="chains" value="A/B/C/D=1-146"/>
</dbReference>
<dbReference type="PDB" id="2FR5">
    <property type="method" value="X-ray"/>
    <property type="resolution" value="1.48 A"/>
    <property type="chains" value="A/B/C/D=1-146"/>
</dbReference>
<dbReference type="PDB" id="2FR6">
    <property type="method" value="X-ray"/>
    <property type="resolution" value="2.07 A"/>
    <property type="chains" value="A/B/C/D=1-146"/>
</dbReference>
<dbReference type="PDBsum" id="1ZAB"/>
<dbReference type="PDBsum" id="2FR5"/>
<dbReference type="PDBsum" id="2FR6"/>
<dbReference type="SMR" id="P56389"/>
<dbReference type="BioGRID" id="215267">
    <property type="interactions" value="4"/>
</dbReference>
<dbReference type="FunCoup" id="P56389">
    <property type="interactions" value="495"/>
</dbReference>
<dbReference type="IntAct" id="P56389">
    <property type="interactions" value="1"/>
</dbReference>
<dbReference type="MINT" id="P56389"/>
<dbReference type="STRING" id="10090.ENSMUSP00000030535"/>
<dbReference type="BindingDB" id="P56389"/>
<dbReference type="ChEMBL" id="CHEMBL2110"/>
<dbReference type="iPTMnet" id="P56389"/>
<dbReference type="PhosphoSitePlus" id="P56389"/>
<dbReference type="jPOST" id="P56389"/>
<dbReference type="PaxDb" id="10090-ENSMUSP00000030535"/>
<dbReference type="PeptideAtlas" id="P56389"/>
<dbReference type="ProteomicsDB" id="281351"/>
<dbReference type="Pumba" id="P56389"/>
<dbReference type="Antibodypedia" id="29806">
    <property type="antibodies" value="324 antibodies from 30 providers"/>
</dbReference>
<dbReference type="DNASU" id="72269"/>
<dbReference type="Ensembl" id="ENSMUST00000030535.4">
    <property type="protein sequence ID" value="ENSMUSP00000030535.4"/>
    <property type="gene ID" value="ENSMUSG00000028755.4"/>
</dbReference>
<dbReference type="GeneID" id="72269"/>
<dbReference type="KEGG" id="mmu:72269"/>
<dbReference type="UCSC" id="uc008vkw.1">
    <property type="organism name" value="mouse"/>
</dbReference>
<dbReference type="AGR" id="MGI:1919519"/>
<dbReference type="CTD" id="978"/>
<dbReference type="MGI" id="MGI:1919519">
    <property type="gene designation" value="Cda"/>
</dbReference>
<dbReference type="VEuPathDB" id="HostDB:ENSMUSG00000028755"/>
<dbReference type="eggNOG" id="KOG0833">
    <property type="taxonomic scope" value="Eukaryota"/>
</dbReference>
<dbReference type="GeneTree" id="ENSGT00390000000911"/>
<dbReference type="HOGENOM" id="CLU_097262_1_2_1"/>
<dbReference type="InParanoid" id="P56389"/>
<dbReference type="OMA" id="LTHFTCV"/>
<dbReference type="OrthoDB" id="414540at2759"/>
<dbReference type="PhylomeDB" id="P56389"/>
<dbReference type="TreeFam" id="TF314486"/>
<dbReference type="BRENDA" id="3.5.4.5">
    <property type="organism ID" value="3474"/>
</dbReference>
<dbReference type="Reactome" id="R-MMU-6798695">
    <property type="pathway name" value="Neutrophil degranulation"/>
</dbReference>
<dbReference type="Reactome" id="R-MMU-73614">
    <property type="pathway name" value="Pyrimidine salvage"/>
</dbReference>
<dbReference type="BioGRID-ORCS" id="72269">
    <property type="hits" value="0 hits in 79 CRISPR screens"/>
</dbReference>
<dbReference type="ChiTaRS" id="Cda">
    <property type="organism name" value="mouse"/>
</dbReference>
<dbReference type="EvolutionaryTrace" id="P56389"/>
<dbReference type="PRO" id="PR:P56389"/>
<dbReference type="Proteomes" id="UP000000589">
    <property type="component" value="Chromosome 4"/>
</dbReference>
<dbReference type="RNAct" id="P56389">
    <property type="molecule type" value="protein"/>
</dbReference>
<dbReference type="Bgee" id="ENSMUSG00000028755">
    <property type="expression patterns" value="Expressed in right kidney and 86 other cell types or tissues"/>
</dbReference>
<dbReference type="GO" id="GO:0005829">
    <property type="term" value="C:cytosol"/>
    <property type="evidence" value="ECO:0000314"/>
    <property type="project" value="MGI"/>
</dbReference>
<dbReference type="GO" id="GO:0004126">
    <property type="term" value="F:cytidine deaminase activity"/>
    <property type="evidence" value="ECO:0000314"/>
    <property type="project" value="MGI"/>
</dbReference>
<dbReference type="GO" id="GO:0019239">
    <property type="term" value="F:deaminase activity"/>
    <property type="evidence" value="ECO:0000266"/>
    <property type="project" value="MGI"/>
</dbReference>
<dbReference type="GO" id="GO:0042802">
    <property type="term" value="F:identical protein binding"/>
    <property type="evidence" value="ECO:0000353"/>
    <property type="project" value="MGI"/>
</dbReference>
<dbReference type="GO" id="GO:0001882">
    <property type="term" value="F:nucleoside binding"/>
    <property type="evidence" value="ECO:0000250"/>
    <property type="project" value="UniProtKB"/>
</dbReference>
<dbReference type="GO" id="GO:0042803">
    <property type="term" value="F:protein homodimerization activity"/>
    <property type="evidence" value="ECO:0000250"/>
    <property type="project" value="UniProtKB"/>
</dbReference>
<dbReference type="GO" id="GO:0008270">
    <property type="term" value="F:zinc ion binding"/>
    <property type="evidence" value="ECO:0000250"/>
    <property type="project" value="UniProtKB"/>
</dbReference>
<dbReference type="GO" id="GO:0071217">
    <property type="term" value="P:cellular response to external biotic stimulus"/>
    <property type="evidence" value="ECO:0007669"/>
    <property type="project" value="Ensembl"/>
</dbReference>
<dbReference type="GO" id="GO:0006248">
    <property type="term" value="P:CMP catabolic process"/>
    <property type="evidence" value="ECO:0000266"/>
    <property type="project" value="MGI"/>
</dbReference>
<dbReference type="GO" id="GO:0009972">
    <property type="term" value="P:cytidine deamination"/>
    <property type="evidence" value="ECO:0000250"/>
    <property type="project" value="UniProtKB"/>
</dbReference>
<dbReference type="GO" id="GO:0006249">
    <property type="term" value="P:dCMP catabolic process"/>
    <property type="evidence" value="ECO:0000266"/>
    <property type="project" value="MGI"/>
</dbReference>
<dbReference type="GO" id="GO:0030308">
    <property type="term" value="P:negative regulation of cell growth"/>
    <property type="evidence" value="ECO:0000250"/>
    <property type="project" value="UniProtKB"/>
</dbReference>
<dbReference type="GO" id="GO:0045980">
    <property type="term" value="P:negative regulation of nucleotide metabolic process"/>
    <property type="evidence" value="ECO:0000250"/>
    <property type="project" value="UniProtKB"/>
</dbReference>
<dbReference type="GO" id="GO:0046898">
    <property type="term" value="P:response to cycloheximide"/>
    <property type="evidence" value="ECO:0007669"/>
    <property type="project" value="Ensembl"/>
</dbReference>
<dbReference type="GO" id="GO:0044206">
    <property type="term" value="P:UMP salvage"/>
    <property type="evidence" value="ECO:0000314"/>
    <property type="project" value="MGI"/>
</dbReference>
<dbReference type="CDD" id="cd01283">
    <property type="entry name" value="cytidine_deaminase"/>
    <property type="match status" value="1"/>
</dbReference>
<dbReference type="FunFam" id="3.40.140.10:FF:000008">
    <property type="entry name" value="Cytidine deaminase"/>
    <property type="match status" value="1"/>
</dbReference>
<dbReference type="Gene3D" id="3.40.140.10">
    <property type="entry name" value="Cytidine Deaminase, domain 2"/>
    <property type="match status" value="1"/>
</dbReference>
<dbReference type="InterPro" id="IPR016192">
    <property type="entry name" value="APOBEC/CMP_deaminase_Zn-bd"/>
</dbReference>
<dbReference type="InterPro" id="IPR002125">
    <property type="entry name" value="CMP_dCMP_dom"/>
</dbReference>
<dbReference type="InterPro" id="IPR050202">
    <property type="entry name" value="Cyt/Deoxycyt_deaminase"/>
</dbReference>
<dbReference type="InterPro" id="IPR006262">
    <property type="entry name" value="Cyt_deam_tetra"/>
</dbReference>
<dbReference type="InterPro" id="IPR016193">
    <property type="entry name" value="Cytidine_deaminase-like"/>
</dbReference>
<dbReference type="NCBIfam" id="TIGR01354">
    <property type="entry name" value="cyt_deam_tetra"/>
    <property type="match status" value="1"/>
</dbReference>
<dbReference type="NCBIfam" id="NF004064">
    <property type="entry name" value="PRK05578.1"/>
    <property type="match status" value="1"/>
</dbReference>
<dbReference type="PANTHER" id="PTHR11644">
    <property type="entry name" value="CYTIDINE DEAMINASE"/>
    <property type="match status" value="1"/>
</dbReference>
<dbReference type="PANTHER" id="PTHR11644:SF2">
    <property type="entry name" value="CYTIDINE DEAMINASE"/>
    <property type="match status" value="1"/>
</dbReference>
<dbReference type="Pfam" id="PF00383">
    <property type="entry name" value="dCMP_cyt_deam_1"/>
    <property type="match status" value="1"/>
</dbReference>
<dbReference type="SUPFAM" id="SSF53927">
    <property type="entry name" value="Cytidine deaminase-like"/>
    <property type="match status" value="1"/>
</dbReference>
<dbReference type="PROSITE" id="PS00903">
    <property type="entry name" value="CYT_DCMP_DEAMINASES_1"/>
    <property type="match status" value="1"/>
</dbReference>
<dbReference type="PROSITE" id="PS51747">
    <property type="entry name" value="CYT_DCMP_DEAMINASES_2"/>
    <property type="match status" value="1"/>
</dbReference>
<comment type="function">
    <text evidence="1">This enzyme scavenges exogenous and endogenous cytidine and 2'-deoxycytidine for UMP synthesis.</text>
</comment>
<comment type="catalytic activity">
    <reaction>
        <text>cytidine + H2O + H(+) = uridine + NH4(+)</text>
        <dbReference type="Rhea" id="RHEA:16069"/>
        <dbReference type="ChEBI" id="CHEBI:15377"/>
        <dbReference type="ChEBI" id="CHEBI:15378"/>
        <dbReference type="ChEBI" id="CHEBI:16704"/>
        <dbReference type="ChEBI" id="CHEBI:17562"/>
        <dbReference type="ChEBI" id="CHEBI:28938"/>
        <dbReference type="EC" id="3.5.4.5"/>
    </reaction>
</comment>
<comment type="catalytic activity">
    <reaction>
        <text>2'-deoxycytidine + H2O + H(+) = 2'-deoxyuridine + NH4(+)</text>
        <dbReference type="Rhea" id="RHEA:13433"/>
        <dbReference type="ChEBI" id="CHEBI:15377"/>
        <dbReference type="ChEBI" id="CHEBI:15378"/>
        <dbReference type="ChEBI" id="CHEBI:15698"/>
        <dbReference type="ChEBI" id="CHEBI:16450"/>
        <dbReference type="ChEBI" id="CHEBI:28938"/>
        <dbReference type="EC" id="3.5.4.5"/>
    </reaction>
</comment>
<comment type="cofactor">
    <cofactor evidence="3">
        <name>Zn(2+)</name>
        <dbReference type="ChEBI" id="CHEBI:29105"/>
    </cofactor>
</comment>
<comment type="subunit">
    <text evidence="3">Homotetramer.</text>
</comment>
<comment type="similarity">
    <text evidence="4">Belongs to the cytidine and deoxycytidylate deaminase family.</text>
</comment>
<protein>
    <recommendedName>
        <fullName>Cytidine deaminase</fullName>
        <ecNumber>3.5.4.5</ecNumber>
    </recommendedName>
    <alternativeName>
        <fullName>Cytidine aminohydrolase</fullName>
    </alternativeName>
</protein>
<accession>P56389</accession>
<accession>Q9D7V3</accession>
<evidence type="ECO:0000250" key="1"/>
<evidence type="ECO:0000255" key="2">
    <source>
        <dbReference type="PROSITE-ProRule" id="PRU01083"/>
    </source>
</evidence>
<evidence type="ECO:0000269" key="3">
    <source>
    </source>
</evidence>
<evidence type="ECO:0000305" key="4"/>
<evidence type="ECO:0007829" key="5">
    <source>
        <dbReference type="PDB" id="2FR5"/>
    </source>
</evidence>
<reference key="1">
    <citation type="journal article" date="2005" name="Science">
        <title>The transcriptional landscape of the mammalian genome.</title>
        <authorList>
            <person name="Carninci P."/>
            <person name="Kasukawa T."/>
            <person name="Katayama S."/>
            <person name="Gough J."/>
            <person name="Frith M.C."/>
            <person name="Maeda N."/>
            <person name="Oyama R."/>
            <person name="Ravasi T."/>
            <person name="Lenhard B."/>
            <person name="Wells C."/>
            <person name="Kodzius R."/>
            <person name="Shimokawa K."/>
            <person name="Bajic V.B."/>
            <person name="Brenner S.E."/>
            <person name="Batalov S."/>
            <person name="Forrest A.R."/>
            <person name="Zavolan M."/>
            <person name="Davis M.J."/>
            <person name="Wilming L.G."/>
            <person name="Aidinis V."/>
            <person name="Allen J.E."/>
            <person name="Ambesi-Impiombato A."/>
            <person name="Apweiler R."/>
            <person name="Aturaliya R.N."/>
            <person name="Bailey T.L."/>
            <person name="Bansal M."/>
            <person name="Baxter L."/>
            <person name="Beisel K.W."/>
            <person name="Bersano T."/>
            <person name="Bono H."/>
            <person name="Chalk A.M."/>
            <person name="Chiu K.P."/>
            <person name="Choudhary V."/>
            <person name="Christoffels A."/>
            <person name="Clutterbuck D.R."/>
            <person name="Crowe M.L."/>
            <person name="Dalla E."/>
            <person name="Dalrymple B.P."/>
            <person name="de Bono B."/>
            <person name="Della Gatta G."/>
            <person name="di Bernardo D."/>
            <person name="Down T."/>
            <person name="Engstrom P."/>
            <person name="Fagiolini M."/>
            <person name="Faulkner G."/>
            <person name="Fletcher C.F."/>
            <person name="Fukushima T."/>
            <person name="Furuno M."/>
            <person name="Futaki S."/>
            <person name="Gariboldi M."/>
            <person name="Georgii-Hemming P."/>
            <person name="Gingeras T.R."/>
            <person name="Gojobori T."/>
            <person name="Green R.E."/>
            <person name="Gustincich S."/>
            <person name="Harbers M."/>
            <person name="Hayashi Y."/>
            <person name="Hensch T.K."/>
            <person name="Hirokawa N."/>
            <person name="Hill D."/>
            <person name="Huminiecki L."/>
            <person name="Iacono M."/>
            <person name="Ikeo K."/>
            <person name="Iwama A."/>
            <person name="Ishikawa T."/>
            <person name="Jakt M."/>
            <person name="Kanapin A."/>
            <person name="Katoh M."/>
            <person name="Kawasawa Y."/>
            <person name="Kelso J."/>
            <person name="Kitamura H."/>
            <person name="Kitano H."/>
            <person name="Kollias G."/>
            <person name="Krishnan S.P."/>
            <person name="Kruger A."/>
            <person name="Kummerfeld S.K."/>
            <person name="Kurochkin I.V."/>
            <person name="Lareau L.F."/>
            <person name="Lazarevic D."/>
            <person name="Lipovich L."/>
            <person name="Liu J."/>
            <person name="Liuni S."/>
            <person name="McWilliam S."/>
            <person name="Madan Babu M."/>
            <person name="Madera M."/>
            <person name="Marchionni L."/>
            <person name="Matsuda H."/>
            <person name="Matsuzawa S."/>
            <person name="Miki H."/>
            <person name="Mignone F."/>
            <person name="Miyake S."/>
            <person name="Morris K."/>
            <person name="Mottagui-Tabar S."/>
            <person name="Mulder N."/>
            <person name="Nakano N."/>
            <person name="Nakauchi H."/>
            <person name="Ng P."/>
            <person name="Nilsson R."/>
            <person name="Nishiguchi S."/>
            <person name="Nishikawa S."/>
            <person name="Nori F."/>
            <person name="Ohara O."/>
            <person name="Okazaki Y."/>
            <person name="Orlando V."/>
            <person name="Pang K.C."/>
            <person name="Pavan W.J."/>
            <person name="Pavesi G."/>
            <person name="Pesole G."/>
            <person name="Petrovsky N."/>
            <person name="Piazza S."/>
            <person name="Reed J."/>
            <person name="Reid J.F."/>
            <person name="Ring B.Z."/>
            <person name="Ringwald M."/>
            <person name="Rost B."/>
            <person name="Ruan Y."/>
            <person name="Salzberg S.L."/>
            <person name="Sandelin A."/>
            <person name="Schneider C."/>
            <person name="Schoenbach C."/>
            <person name="Sekiguchi K."/>
            <person name="Semple C.A."/>
            <person name="Seno S."/>
            <person name="Sessa L."/>
            <person name="Sheng Y."/>
            <person name="Shibata Y."/>
            <person name="Shimada H."/>
            <person name="Shimada K."/>
            <person name="Silva D."/>
            <person name="Sinclair B."/>
            <person name="Sperling S."/>
            <person name="Stupka E."/>
            <person name="Sugiura K."/>
            <person name="Sultana R."/>
            <person name="Takenaka Y."/>
            <person name="Taki K."/>
            <person name="Tammoja K."/>
            <person name="Tan S.L."/>
            <person name="Tang S."/>
            <person name="Taylor M.S."/>
            <person name="Tegner J."/>
            <person name="Teichmann S.A."/>
            <person name="Ueda H.R."/>
            <person name="van Nimwegen E."/>
            <person name="Verardo R."/>
            <person name="Wei C.L."/>
            <person name="Yagi K."/>
            <person name="Yamanishi H."/>
            <person name="Zabarovsky E."/>
            <person name="Zhu S."/>
            <person name="Zimmer A."/>
            <person name="Hide W."/>
            <person name="Bult C."/>
            <person name="Grimmond S.M."/>
            <person name="Teasdale R.D."/>
            <person name="Liu E.T."/>
            <person name="Brusic V."/>
            <person name="Quackenbush J."/>
            <person name="Wahlestedt C."/>
            <person name="Mattick J.S."/>
            <person name="Hume D.A."/>
            <person name="Kai C."/>
            <person name="Sasaki D."/>
            <person name="Tomaru Y."/>
            <person name="Fukuda S."/>
            <person name="Kanamori-Katayama M."/>
            <person name="Suzuki M."/>
            <person name="Aoki J."/>
            <person name="Arakawa T."/>
            <person name="Iida J."/>
            <person name="Imamura K."/>
            <person name="Itoh M."/>
            <person name="Kato T."/>
            <person name="Kawaji H."/>
            <person name="Kawagashira N."/>
            <person name="Kawashima T."/>
            <person name="Kojima M."/>
            <person name="Kondo S."/>
            <person name="Konno H."/>
            <person name="Nakano K."/>
            <person name="Ninomiya N."/>
            <person name="Nishio T."/>
            <person name="Okada M."/>
            <person name="Plessy C."/>
            <person name="Shibata K."/>
            <person name="Shiraki T."/>
            <person name="Suzuki S."/>
            <person name="Tagami M."/>
            <person name="Waki K."/>
            <person name="Watahiki A."/>
            <person name="Okamura-Oho Y."/>
            <person name="Suzuki H."/>
            <person name="Kawai J."/>
            <person name="Hayashizaki Y."/>
        </authorList>
    </citation>
    <scope>NUCLEOTIDE SEQUENCE [LARGE SCALE MRNA]</scope>
    <source>
        <strain>C57BL/6J</strain>
        <tissue>Stomach</tissue>
    </source>
</reference>
<reference key="2">
    <citation type="journal article" date="2004" name="Genome Res.">
        <title>The status, quality, and expansion of the NIH full-length cDNA project: the Mammalian Gene Collection (MGC).</title>
        <authorList>
            <consortium name="The MGC Project Team"/>
        </authorList>
    </citation>
    <scope>NUCLEOTIDE SEQUENCE [LARGE SCALE MRNA]</scope>
    <source>
        <tissue>Pancreas</tissue>
    </source>
</reference>
<reference key="3">
    <citation type="journal article" date="2010" name="Cell">
        <title>A tissue-specific atlas of mouse protein phosphorylation and expression.</title>
        <authorList>
            <person name="Huttlin E.L."/>
            <person name="Jedrychowski M.P."/>
            <person name="Elias J.E."/>
            <person name="Goswami T."/>
            <person name="Rad R."/>
            <person name="Beausoleil S.A."/>
            <person name="Villen J."/>
            <person name="Haas W."/>
            <person name="Sowa M.E."/>
            <person name="Gygi S.P."/>
        </authorList>
    </citation>
    <scope>IDENTIFICATION BY MASS SPECTROMETRY [LARGE SCALE ANALYSIS]</scope>
    <source>
        <tissue>Brain</tissue>
        <tissue>Kidney</tissue>
        <tissue>Liver</tissue>
    </source>
</reference>
<reference key="4">
    <citation type="journal article" date="2006" name="Biochemistry">
        <title>The 1.48 A resolution crystal structure of the homotetrameric cytidine deaminase from mouse.</title>
        <authorList>
            <person name="Teh A.H."/>
            <person name="Kimura M."/>
            <person name="Yamamoto M."/>
            <person name="Tanaka N."/>
            <person name="Yamaguchi I."/>
            <person name="Kumasaka T."/>
        </authorList>
    </citation>
    <scope>X-RAY CRYSTALLOGRAPHY (1.48 ANGSTROMS) IN COMPLEX WITH CYTIDINE</scope>
    <scope>SUBUNIT</scope>
    <scope>COFACTOR</scope>
    <scope>ACTIVE SITE</scope>
    <scope>SUBSTRATE-BINDING REGION</scope>
    <scope>ZINC-BINDING SITES</scope>
</reference>
<proteinExistence type="evidence at protein level"/>
<keyword id="KW-0002">3D-structure</keyword>
<keyword id="KW-0378">Hydrolase</keyword>
<keyword id="KW-0479">Metal-binding</keyword>
<keyword id="KW-1185">Reference proteome</keyword>
<keyword id="KW-0862">Zinc</keyword>
<gene>
    <name type="primary">Cda</name>
    <name type="synonym">Cdd</name>
</gene>
<organism>
    <name type="scientific">Mus musculus</name>
    <name type="common">Mouse</name>
    <dbReference type="NCBI Taxonomy" id="10090"/>
    <lineage>
        <taxon>Eukaryota</taxon>
        <taxon>Metazoa</taxon>
        <taxon>Chordata</taxon>
        <taxon>Craniata</taxon>
        <taxon>Vertebrata</taxon>
        <taxon>Euteleostomi</taxon>
        <taxon>Mammalia</taxon>
        <taxon>Eutheria</taxon>
        <taxon>Euarchontoglires</taxon>
        <taxon>Glires</taxon>
        <taxon>Rodentia</taxon>
        <taxon>Myomorpha</taxon>
        <taxon>Muroidea</taxon>
        <taxon>Muridae</taxon>
        <taxon>Murinae</taxon>
        <taxon>Mus</taxon>
        <taxon>Mus</taxon>
    </lineage>
</organism>
<sequence>MAQERPSCAVEPEHVQRLLLSSREAKKSAYCPYSRFPVGAALLTGDGRIFSGCNIENACYPLGVCAERTAIQKAISEGYKDFRAIAISSDLQEEFISPCGACRQVMREFGTDWAVYMTKPDGTFVVRTVQELLPASFGPEDLQKIQ</sequence>